<accession>Q52371</accession>
<gene>
    <name evidence="5" type="primary">sctN</name>
    <name type="synonym">hrcN</name>
    <name type="synonym">hrpJ4</name>
</gene>
<protein>
    <recommendedName>
        <fullName evidence="3">Type 3 secretion system ATPase</fullName>
        <shortName evidence="3">T3SS ATPase</shortName>
        <ecNumber evidence="3">7.4.2.8</ecNumber>
    </recommendedName>
</protein>
<evidence type="ECO:0000250" key="1">
    <source>
        <dbReference type="UniProtKB" id="P0A1B9"/>
    </source>
</evidence>
<evidence type="ECO:0000250" key="2">
    <source>
        <dbReference type="UniProtKB" id="P0A1C1"/>
    </source>
</evidence>
<evidence type="ECO:0000250" key="3">
    <source>
        <dbReference type="UniProtKB" id="Q8RK01"/>
    </source>
</evidence>
<evidence type="ECO:0000269" key="4">
    <source>
    </source>
</evidence>
<evidence type="ECO:0000303" key="5">
    <source>
    </source>
</evidence>
<evidence type="ECO:0000305" key="6"/>
<comment type="function">
    <text evidence="1 2 3">ATPase component of the type III secretion system (T3SS), also called injectisome, which is used to inject bacterial effector proteins into eukaryotic host cells (By similarity). Acts as a molecular motor to provide the energy that is required for the export of proteins (By similarity). Required for type III secretion apparatus (T3SA) formation, proper protein secretion, host cell invasion and virulence (By similarity). May play a critical role in T3SS substrate recognition, disassembly of the effector/chaperone complex and unfolding of the effector in an ATP-dependent manner prior to secretion (By similarity).</text>
</comment>
<comment type="catalytic activity">
    <reaction evidence="3">
        <text>ATP + H2O + cellular proteinSide 1 = ADP + phosphate + cellular proteinSide 2.</text>
        <dbReference type="EC" id="7.4.2.8"/>
    </reaction>
</comment>
<comment type="subunit">
    <text evidence="3 4">The core secretion machinery of the T3SS is composed of approximately 20 different proteins, including cytoplasmic components, a base, an export apparatus and a needle (PubMed:30107569). This subunit is part of the cytosolic complex (By similarity). Forms homododecamers (By similarity).</text>
</comment>
<comment type="subcellular location">
    <subcellularLocation>
        <location evidence="3">Cytoplasm</location>
    </subcellularLocation>
</comment>
<comment type="similarity">
    <text evidence="6">Belongs to the ATPase alpha/beta chains family. T3SS ATPase subfamily.</text>
</comment>
<comment type="sequence caution" evidence="6">
    <conflict type="frameshift">
        <sequence resource="EMBL-CDS" id="AAA81942"/>
    </conflict>
</comment>
<name>SCTN_PSESY</name>
<sequence length="449" mass="48714">MNAALNLWKDAHAKRLSQYCAVRVIGRVSAVRRILLECRIPSAKVGDLCEVSKADGSLLLAEIVGFTQECTLLSALGPPDGIQVGAPIRPLGVAHRIGVDDSLLGCVLDGFGRPLMGDCLGAFAGPEDRRTTLPVIADALPPTQRPRITRALPTGIRAIDSAILLGEGQRVGLFAGAGCGKTTLMAELARNMDCDVIVFGLIGERGRELREFLDHELDETLRRRSVLVCATSDRSSMERARAAFTATAIAEAFRARGQKVLLLLDSLTRFARAQREIGIASGEPLGRGGLPPSVYTLLPRLVERAGMSENGSITALYTVLIEQDSMNDPVADEVRSLLDGHIVLSRKLAERGHYPAIDVSASISRILSNVTGRKHQRANNRLRQLLAAYKQVEMLLRLGEYQAGADPVTDCAVQLNEAINAFLRQDLREPVPLQETLDRLLQLTSQLPE</sequence>
<dbReference type="EC" id="7.4.2.8" evidence="3"/>
<dbReference type="EMBL" id="U07346">
    <property type="protein sequence ID" value="AAA81942.1"/>
    <property type="status" value="ALT_FRAME"/>
    <property type="molecule type" value="Genomic_DNA"/>
</dbReference>
<dbReference type="SMR" id="Q52371"/>
<dbReference type="GO" id="GO:0005737">
    <property type="term" value="C:cytoplasm"/>
    <property type="evidence" value="ECO:0007669"/>
    <property type="project" value="UniProtKB-SubCell"/>
</dbReference>
<dbReference type="GO" id="GO:0030257">
    <property type="term" value="C:type III protein secretion system complex"/>
    <property type="evidence" value="ECO:0007669"/>
    <property type="project" value="InterPro"/>
</dbReference>
<dbReference type="GO" id="GO:0005524">
    <property type="term" value="F:ATP binding"/>
    <property type="evidence" value="ECO:0007669"/>
    <property type="project" value="UniProtKB-KW"/>
</dbReference>
<dbReference type="GO" id="GO:0016887">
    <property type="term" value="F:ATP hydrolysis activity"/>
    <property type="evidence" value="ECO:0007669"/>
    <property type="project" value="InterPro"/>
</dbReference>
<dbReference type="GO" id="GO:0008564">
    <property type="term" value="F:protein-exporting ATPase activity"/>
    <property type="evidence" value="ECO:0007669"/>
    <property type="project" value="UniProtKB-EC"/>
</dbReference>
<dbReference type="GO" id="GO:0046933">
    <property type="term" value="F:proton-transporting ATP synthase activity, rotational mechanism"/>
    <property type="evidence" value="ECO:0007669"/>
    <property type="project" value="TreeGrafter"/>
</dbReference>
<dbReference type="GO" id="GO:0030254">
    <property type="term" value="P:protein secretion by the type III secretion system"/>
    <property type="evidence" value="ECO:0007669"/>
    <property type="project" value="InterPro"/>
</dbReference>
<dbReference type="CDD" id="cd18117">
    <property type="entry name" value="ATP-synt_flagellum-secretory_path_III_N"/>
    <property type="match status" value="1"/>
</dbReference>
<dbReference type="CDD" id="cd01136">
    <property type="entry name" value="ATPase_flagellum-secretory_path_III"/>
    <property type="match status" value="1"/>
</dbReference>
<dbReference type="FunFam" id="3.40.50.12240:FF:000002">
    <property type="entry name" value="Flagellum-specific ATP synthase FliI"/>
    <property type="match status" value="1"/>
</dbReference>
<dbReference type="Gene3D" id="3.40.50.12240">
    <property type="match status" value="1"/>
</dbReference>
<dbReference type="InterPro" id="IPR003593">
    <property type="entry name" value="AAA+_ATPase"/>
</dbReference>
<dbReference type="InterPro" id="IPR020003">
    <property type="entry name" value="ATPase_a/bsu_AS"/>
</dbReference>
<dbReference type="InterPro" id="IPR050053">
    <property type="entry name" value="ATPase_alpha/beta_chains"/>
</dbReference>
<dbReference type="InterPro" id="IPR004100">
    <property type="entry name" value="ATPase_F1/V1/A1_a/bsu_N"/>
</dbReference>
<dbReference type="InterPro" id="IPR000194">
    <property type="entry name" value="ATPase_F1/V1/A1_a/bsu_nucl-bd"/>
</dbReference>
<dbReference type="InterPro" id="IPR005714">
    <property type="entry name" value="ATPase_T3SS_FliI/YscN"/>
</dbReference>
<dbReference type="InterPro" id="IPR027417">
    <property type="entry name" value="P-loop_NTPase"/>
</dbReference>
<dbReference type="InterPro" id="IPR001763">
    <property type="entry name" value="Rhodanese-like_dom"/>
</dbReference>
<dbReference type="InterPro" id="IPR040627">
    <property type="entry name" value="T3SS_ATPase_C"/>
</dbReference>
<dbReference type="NCBIfam" id="TIGR01026">
    <property type="entry name" value="fliI_yscN"/>
    <property type="match status" value="1"/>
</dbReference>
<dbReference type="PANTHER" id="PTHR15184">
    <property type="entry name" value="ATP SYNTHASE"/>
    <property type="match status" value="1"/>
</dbReference>
<dbReference type="PANTHER" id="PTHR15184:SF9">
    <property type="entry name" value="SPI-1 TYPE 3 SECRETION SYSTEM ATPASE"/>
    <property type="match status" value="1"/>
</dbReference>
<dbReference type="Pfam" id="PF00006">
    <property type="entry name" value="ATP-synt_ab"/>
    <property type="match status" value="1"/>
</dbReference>
<dbReference type="Pfam" id="PF02874">
    <property type="entry name" value="ATP-synt_ab_N"/>
    <property type="match status" value="1"/>
</dbReference>
<dbReference type="Pfam" id="PF18269">
    <property type="entry name" value="T3SS_ATPase_C"/>
    <property type="match status" value="1"/>
</dbReference>
<dbReference type="SMART" id="SM00382">
    <property type="entry name" value="AAA"/>
    <property type="match status" value="1"/>
</dbReference>
<dbReference type="SUPFAM" id="SSF52540">
    <property type="entry name" value="P-loop containing nucleoside triphosphate hydrolases"/>
    <property type="match status" value="1"/>
</dbReference>
<dbReference type="PROSITE" id="PS00152">
    <property type="entry name" value="ATPASE_ALPHA_BETA"/>
    <property type="match status" value="1"/>
</dbReference>
<feature type="chain" id="PRO_0000144703" description="Type 3 secretion system ATPase">
    <location>
        <begin position="1"/>
        <end position="449"/>
    </location>
</feature>
<feature type="binding site" evidence="2">
    <location>
        <begin position="178"/>
        <end position="183"/>
    </location>
    <ligand>
        <name>ATP</name>
        <dbReference type="ChEBI" id="CHEBI:30616"/>
    </ligand>
</feature>
<reference key="1">
    <citation type="journal article" date="1994" name="Mol. Plant Microbe Interact.">
        <title>Characterization of the hrpJ and hrpU operons of Pseudomonas syringae pv. syringae Pss61: similarity with components of enteric bacteria involved in flagellar biogenesis and demonstration of their role in HarpinPss secretion.</title>
        <authorList>
            <person name="Lidell M.C."/>
            <person name="Hutcheson S.W."/>
        </authorList>
    </citation>
    <scope>NUCLEOTIDE SEQUENCE [GENOMIC DNA]</scope>
    <source>
        <strain>Pss61</strain>
    </source>
</reference>
<reference key="2">
    <citation type="journal article" date="1998" name="Microbiol. Mol. Biol. Rev.">
        <title>Type III protein secretion systems in bacterial pathogens of animals and plants.</title>
        <authorList>
            <person name="Hueck C.J."/>
        </authorList>
    </citation>
    <scope>REVIEW</scope>
    <scope>NOMENCLATURE</scope>
</reference>
<reference key="3">
    <citation type="journal article" date="2018" name="FEMS Microbiol. Lett.">
        <title>Bacterial type III secretion systems: a complex device for the delivery of bacterial effector proteins into eukaryotic host cells.</title>
        <authorList>
            <person name="Wagner S."/>
            <person name="Grin I."/>
            <person name="Malmsheimer S."/>
            <person name="Singh N."/>
            <person name="Torres-Vargas C.E."/>
            <person name="Westerhausen S."/>
        </authorList>
    </citation>
    <scope>REVIEW</scope>
    <scope>SUBUNIT</scope>
</reference>
<proteinExistence type="evidence at protein level"/>
<keyword id="KW-0067">ATP-binding</keyword>
<keyword id="KW-0963">Cytoplasm</keyword>
<keyword id="KW-0547">Nucleotide-binding</keyword>
<keyword id="KW-0653">Protein transport</keyword>
<keyword id="KW-1278">Translocase</keyword>
<keyword id="KW-0813">Transport</keyword>
<keyword id="KW-0843">Virulence</keyword>
<organism>
    <name type="scientific">Pseudomonas syringae pv. syringae</name>
    <dbReference type="NCBI Taxonomy" id="321"/>
    <lineage>
        <taxon>Bacteria</taxon>
        <taxon>Pseudomonadati</taxon>
        <taxon>Pseudomonadota</taxon>
        <taxon>Gammaproteobacteria</taxon>
        <taxon>Pseudomonadales</taxon>
        <taxon>Pseudomonadaceae</taxon>
        <taxon>Pseudomonas</taxon>
        <taxon>Pseudomonas syringae</taxon>
    </lineage>
</organism>